<gene>
    <name type="primary">TRM1</name>
</gene>
<protein>
    <recommendedName>
        <fullName>Thioredoxin M-type, chloroplastic</fullName>
        <shortName>Trx-M</shortName>
    </recommendedName>
</protein>
<dbReference type="EMBL" id="L40957">
    <property type="protein sequence ID" value="AAA92464.1"/>
    <property type="molecule type" value="mRNA"/>
</dbReference>
<dbReference type="PIR" id="T03957">
    <property type="entry name" value="T03957"/>
</dbReference>
<dbReference type="SMR" id="Q41864"/>
<dbReference type="FunCoup" id="Q41864">
    <property type="interactions" value="917"/>
</dbReference>
<dbReference type="STRING" id="4577.Q41864"/>
<dbReference type="PaxDb" id="4577-GRMZM2G181258_P01"/>
<dbReference type="EnsemblPlants" id="Zm00001eb138600_T001">
    <property type="protein sequence ID" value="Zm00001eb138600_P001"/>
    <property type="gene ID" value="Zm00001eb138600"/>
</dbReference>
<dbReference type="Gramene" id="Zm00001eb138600_T001">
    <property type="protein sequence ID" value="Zm00001eb138600_P001"/>
    <property type="gene ID" value="Zm00001eb138600"/>
</dbReference>
<dbReference type="MaizeGDB" id="114054"/>
<dbReference type="eggNOG" id="KOG0910">
    <property type="taxonomic scope" value="Eukaryota"/>
</dbReference>
<dbReference type="InParanoid" id="Q41864"/>
<dbReference type="OMA" id="AKATQKC"/>
<dbReference type="OrthoDB" id="2121326at2759"/>
<dbReference type="Proteomes" id="UP000007305">
    <property type="component" value="Chromosome 3"/>
</dbReference>
<dbReference type="ExpressionAtlas" id="Q41864">
    <property type="expression patterns" value="baseline and differential"/>
</dbReference>
<dbReference type="GO" id="GO:0009507">
    <property type="term" value="C:chloroplast"/>
    <property type="evidence" value="ECO:0007669"/>
    <property type="project" value="UniProtKB-SubCell"/>
</dbReference>
<dbReference type="GO" id="GO:0005737">
    <property type="term" value="C:cytoplasm"/>
    <property type="evidence" value="ECO:0000318"/>
    <property type="project" value="GO_Central"/>
</dbReference>
<dbReference type="GO" id="GO:0015035">
    <property type="term" value="F:protein-disulfide reductase activity"/>
    <property type="evidence" value="ECO:0000318"/>
    <property type="project" value="GO_Central"/>
</dbReference>
<dbReference type="CDD" id="cd02947">
    <property type="entry name" value="TRX_family"/>
    <property type="match status" value="1"/>
</dbReference>
<dbReference type="FunFam" id="3.40.30.10:FF:000001">
    <property type="entry name" value="Thioredoxin"/>
    <property type="match status" value="1"/>
</dbReference>
<dbReference type="Gene3D" id="3.40.30.10">
    <property type="entry name" value="Glutaredoxin"/>
    <property type="match status" value="1"/>
</dbReference>
<dbReference type="InterPro" id="IPR005746">
    <property type="entry name" value="Thioredoxin"/>
</dbReference>
<dbReference type="InterPro" id="IPR036249">
    <property type="entry name" value="Thioredoxin-like_sf"/>
</dbReference>
<dbReference type="InterPro" id="IPR017937">
    <property type="entry name" value="Thioredoxin_CS"/>
</dbReference>
<dbReference type="InterPro" id="IPR013766">
    <property type="entry name" value="Thioredoxin_domain"/>
</dbReference>
<dbReference type="NCBIfam" id="TIGR01068">
    <property type="entry name" value="thioredoxin"/>
    <property type="match status" value="1"/>
</dbReference>
<dbReference type="PANTHER" id="PTHR45663">
    <property type="entry name" value="GEO12009P1"/>
    <property type="match status" value="1"/>
</dbReference>
<dbReference type="PANTHER" id="PTHR45663:SF42">
    <property type="entry name" value="THIOREDOXIN M5, CHLOROPLASTIC"/>
    <property type="match status" value="1"/>
</dbReference>
<dbReference type="Pfam" id="PF00085">
    <property type="entry name" value="Thioredoxin"/>
    <property type="match status" value="1"/>
</dbReference>
<dbReference type="PRINTS" id="PR00421">
    <property type="entry name" value="THIOREDOXIN"/>
</dbReference>
<dbReference type="SUPFAM" id="SSF52833">
    <property type="entry name" value="Thioredoxin-like"/>
    <property type="match status" value="1"/>
</dbReference>
<dbReference type="PROSITE" id="PS00194">
    <property type="entry name" value="THIOREDOXIN_1"/>
    <property type="match status" value="1"/>
</dbReference>
<dbReference type="PROSITE" id="PS51352">
    <property type="entry name" value="THIOREDOXIN_2"/>
    <property type="match status" value="1"/>
</dbReference>
<organism>
    <name type="scientific">Zea mays</name>
    <name type="common">Maize</name>
    <dbReference type="NCBI Taxonomy" id="4577"/>
    <lineage>
        <taxon>Eukaryota</taxon>
        <taxon>Viridiplantae</taxon>
        <taxon>Streptophyta</taxon>
        <taxon>Embryophyta</taxon>
        <taxon>Tracheophyta</taxon>
        <taxon>Spermatophyta</taxon>
        <taxon>Magnoliopsida</taxon>
        <taxon>Liliopsida</taxon>
        <taxon>Poales</taxon>
        <taxon>Poaceae</taxon>
        <taxon>PACMAD clade</taxon>
        <taxon>Panicoideae</taxon>
        <taxon>Andropogonodae</taxon>
        <taxon>Andropogoneae</taxon>
        <taxon>Tripsacinae</taxon>
        <taxon>Zea</taxon>
    </lineage>
</organism>
<accession>Q41864</accession>
<name>TRXM_MAIZE</name>
<feature type="transit peptide" description="Chloroplast" evidence="2">
    <location>
        <begin position="1"/>
        <end position="53"/>
    </location>
</feature>
<feature type="chain" id="PRO_0000034175" description="Thioredoxin M-type, chloroplastic">
    <location>
        <begin position="54"/>
        <end position="167"/>
    </location>
</feature>
<feature type="domain" description="Thioredoxin" evidence="3">
    <location>
        <begin position="54"/>
        <end position="165"/>
    </location>
</feature>
<feature type="disulfide bond" description="Redox-active" evidence="3">
    <location>
        <begin position="89"/>
        <end position="92"/>
    </location>
</feature>
<proteinExistence type="evidence at transcript level"/>
<comment type="function">
    <text evidence="1">Participates in various redox reactions through the reversible oxidation of the active center dithiol to a disulfide. The M form is known to activate NADP-malate dehydrogenase (By similarity).</text>
</comment>
<comment type="subunit">
    <text evidence="1">Forms a complex with heterodimeric ferredoxin-thioredoxin reductase (FTR) and ferredoxin.</text>
</comment>
<comment type="subcellular location">
    <subcellularLocation>
        <location evidence="1">Plastid</location>
        <location evidence="1">Chloroplast</location>
    </subcellularLocation>
</comment>
<comment type="similarity">
    <text evidence="4">Belongs to the thioredoxin family. Plant M-type subfamily.</text>
</comment>
<keyword id="KW-0150">Chloroplast</keyword>
<keyword id="KW-1015">Disulfide bond</keyword>
<keyword id="KW-0249">Electron transport</keyword>
<keyword id="KW-0934">Plastid</keyword>
<keyword id="KW-0676">Redox-active center</keyword>
<keyword id="KW-1185">Reference proteome</keyword>
<keyword id="KW-0809">Transit peptide</keyword>
<keyword id="KW-0813">Transport</keyword>
<evidence type="ECO:0000250" key="1"/>
<evidence type="ECO:0000255" key="2"/>
<evidence type="ECO:0000255" key="3">
    <source>
        <dbReference type="PROSITE-ProRule" id="PRU00691"/>
    </source>
</evidence>
<evidence type="ECO:0000305" key="4"/>
<reference key="1">
    <citation type="online journal article" date="1995" name="Plant Gene Register">
        <title>Isolation of a full-length cDNA clone for thioredoxin-m from maize.</title>
        <authorList>
            <person name="Trevanion S.J."/>
            <person name="Ashton A.R."/>
        </authorList>
        <locator>PGR95-129</locator>
    </citation>
    <scope>NUCLEOTIDE SEQUENCE [MRNA]</scope>
    <source>
        <strain>cv. B23</strain>
        <tissue>Leaf</tissue>
    </source>
</reference>
<sequence length="167" mass="18073">MAMETCFRAWALHAPAGSKDRLLVGNLVLPSKRALAPLSVGRVATRRPRHVCQSKNAVDEVVVADEKNWDGLVMACETPVLVEFWAPWCGPCRMIAPVIDELAKDYAGKITCCKVNTDDSPNVASTYGIRSIPTVLIFKGGEKKESVIGAVPKSTLTTLIDKYIGSS</sequence>